<accession>O77082</accession>
<accession>Q54M89</accession>
<proteinExistence type="evidence at protein level"/>
<sequence length="154" mass="17841">MPLIPTENKLAIYRYLFQEGVLVAPKDFHLAKHPQIETVSNLDVLQILRSFKSRKFVTETFNWQYYYWVLTEEGIKYLRTYLQVPESVVPATMKKQASRPSTYTRSEETKRTGASGDFDPSFNRGDRRQGGDRRGGMGRGQYRTERSAPAPQQN</sequence>
<gene>
    <name type="primary">rps10</name>
    <name type="ORF">DDB_G0286117</name>
</gene>
<name>RS10_DICDI</name>
<dbReference type="EMBL" id="AF049896">
    <property type="protein sequence ID" value="AAC64694.1"/>
    <property type="molecule type" value="Genomic_DNA"/>
</dbReference>
<dbReference type="EMBL" id="AF095643">
    <property type="protein sequence ID" value="AAC64786.1"/>
    <property type="molecule type" value="mRNA"/>
</dbReference>
<dbReference type="EMBL" id="AAFI02000085">
    <property type="protein sequence ID" value="EAL64351.1"/>
    <property type="molecule type" value="Genomic_DNA"/>
</dbReference>
<dbReference type="RefSeq" id="XP_637859.1">
    <property type="nucleotide sequence ID" value="XM_632767.1"/>
</dbReference>
<dbReference type="SMR" id="O77082"/>
<dbReference type="FunCoup" id="O77082">
    <property type="interactions" value="684"/>
</dbReference>
<dbReference type="STRING" id="44689.O77082"/>
<dbReference type="PaxDb" id="44689-DDB0191166"/>
<dbReference type="EnsemblProtists" id="EAL64351">
    <property type="protein sequence ID" value="EAL64351"/>
    <property type="gene ID" value="DDB_G0286117"/>
</dbReference>
<dbReference type="GeneID" id="8625456"/>
<dbReference type="KEGG" id="ddi:DDB_G0286117"/>
<dbReference type="dictyBase" id="DDB_G0286117">
    <property type="gene designation" value="rps10"/>
</dbReference>
<dbReference type="VEuPathDB" id="AmoebaDB:DDB_G0286117"/>
<dbReference type="eggNOG" id="KOG3344">
    <property type="taxonomic scope" value="Eukaryota"/>
</dbReference>
<dbReference type="HOGENOM" id="CLU_089349_0_1_1"/>
<dbReference type="InParanoid" id="O77082"/>
<dbReference type="OMA" id="YRRRDQE"/>
<dbReference type="PhylomeDB" id="O77082"/>
<dbReference type="Reactome" id="R-DDI-156827">
    <property type="pathway name" value="L13a-mediated translational silencing of Ceruloplasmin expression"/>
</dbReference>
<dbReference type="Reactome" id="R-DDI-1799339">
    <property type="pathway name" value="SRP-dependent cotranslational protein targeting to membrane"/>
</dbReference>
<dbReference type="Reactome" id="R-DDI-72689">
    <property type="pathway name" value="Formation of a pool of free 40S subunits"/>
</dbReference>
<dbReference type="Reactome" id="R-DDI-72695">
    <property type="pathway name" value="Formation of the ternary complex, and subsequently, the 43S complex"/>
</dbReference>
<dbReference type="Reactome" id="R-DDI-72702">
    <property type="pathway name" value="Ribosomal scanning and start codon recognition"/>
</dbReference>
<dbReference type="Reactome" id="R-DDI-72706">
    <property type="pathway name" value="GTP hydrolysis and joining of the 60S ribosomal subunit"/>
</dbReference>
<dbReference type="Reactome" id="R-DDI-975956">
    <property type="pathway name" value="Nonsense Mediated Decay (NMD) independent of the Exon Junction Complex (EJC)"/>
</dbReference>
<dbReference type="Reactome" id="R-DDI-975957">
    <property type="pathway name" value="Nonsense Mediated Decay (NMD) enhanced by the Exon Junction Complex (EJC)"/>
</dbReference>
<dbReference type="PRO" id="PR:O77082"/>
<dbReference type="Proteomes" id="UP000002195">
    <property type="component" value="Chromosome 4"/>
</dbReference>
<dbReference type="GO" id="GO:0022627">
    <property type="term" value="C:cytosolic small ribosomal subunit"/>
    <property type="evidence" value="ECO:0000318"/>
    <property type="project" value="GO_Central"/>
</dbReference>
<dbReference type="GO" id="GO:0000822">
    <property type="term" value="F:inositol hexakisphosphate binding"/>
    <property type="evidence" value="ECO:0000314"/>
    <property type="project" value="dictyBase"/>
</dbReference>
<dbReference type="GO" id="GO:0003723">
    <property type="term" value="F:RNA binding"/>
    <property type="evidence" value="ECO:0000318"/>
    <property type="project" value="GO_Central"/>
</dbReference>
<dbReference type="GO" id="GO:0003735">
    <property type="term" value="F:structural constituent of ribosome"/>
    <property type="evidence" value="ECO:0000318"/>
    <property type="project" value="GO_Central"/>
</dbReference>
<dbReference type="FunFam" id="1.10.10.10:FF:000025">
    <property type="entry name" value="40S ribosomal protein S10"/>
    <property type="match status" value="1"/>
</dbReference>
<dbReference type="Gene3D" id="1.10.10.10">
    <property type="entry name" value="Winged helix-like DNA-binding domain superfamily/Winged helix DNA-binding domain"/>
    <property type="match status" value="1"/>
</dbReference>
<dbReference type="InterPro" id="IPR005326">
    <property type="entry name" value="Plectin_eS10_N"/>
</dbReference>
<dbReference type="InterPro" id="IPR037447">
    <property type="entry name" value="Ribosomal_eS10"/>
</dbReference>
<dbReference type="InterPro" id="IPR036388">
    <property type="entry name" value="WH-like_DNA-bd_sf"/>
</dbReference>
<dbReference type="PANTHER" id="PTHR12146">
    <property type="entry name" value="40S RIBOSOMAL PROTEIN S10"/>
    <property type="match status" value="1"/>
</dbReference>
<dbReference type="PANTHER" id="PTHR12146:SF0">
    <property type="entry name" value="RIBOSOMAL PROTEIN S10"/>
    <property type="match status" value="1"/>
</dbReference>
<dbReference type="Pfam" id="PF03501">
    <property type="entry name" value="S10_plectin"/>
    <property type="match status" value="1"/>
</dbReference>
<reference key="1">
    <citation type="journal article" date="1998" name="Curr. Genet.">
        <title>Cloning, sequencing and developmental expression of the genes encoding S4 and S10 ribosomal proteins in the cellular slime mould Dictyostelium discoideum.</title>
        <authorList>
            <person name="Tapparo A."/>
            <person name="Satre M."/>
            <person name="Klein G."/>
        </authorList>
    </citation>
    <scope>NUCLEOTIDE SEQUENCE [GENOMIC DNA / MRNA]</scope>
    <scope>PROTEIN SEQUENCE OF 2-29</scope>
    <source>
        <strain>AX2</strain>
    </source>
</reference>
<reference key="2">
    <citation type="journal article" date="2005" name="Nature">
        <title>The genome of the social amoeba Dictyostelium discoideum.</title>
        <authorList>
            <person name="Eichinger L."/>
            <person name="Pachebat J.A."/>
            <person name="Gloeckner G."/>
            <person name="Rajandream M.A."/>
            <person name="Sucgang R."/>
            <person name="Berriman M."/>
            <person name="Song J."/>
            <person name="Olsen R."/>
            <person name="Szafranski K."/>
            <person name="Xu Q."/>
            <person name="Tunggal B."/>
            <person name="Kummerfeld S."/>
            <person name="Madera M."/>
            <person name="Konfortov B.A."/>
            <person name="Rivero F."/>
            <person name="Bankier A.T."/>
            <person name="Lehmann R."/>
            <person name="Hamlin N."/>
            <person name="Davies R."/>
            <person name="Gaudet P."/>
            <person name="Fey P."/>
            <person name="Pilcher K."/>
            <person name="Chen G."/>
            <person name="Saunders D."/>
            <person name="Sodergren E.J."/>
            <person name="Davis P."/>
            <person name="Kerhornou A."/>
            <person name="Nie X."/>
            <person name="Hall N."/>
            <person name="Anjard C."/>
            <person name="Hemphill L."/>
            <person name="Bason N."/>
            <person name="Farbrother P."/>
            <person name="Desany B."/>
            <person name="Just E."/>
            <person name="Morio T."/>
            <person name="Rost R."/>
            <person name="Churcher C.M."/>
            <person name="Cooper J."/>
            <person name="Haydock S."/>
            <person name="van Driessche N."/>
            <person name="Cronin A."/>
            <person name="Goodhead I."/>
            <person name="Muzny D.M."/>
            <person name="Mourier T."/>
            <person name="Pain A."/>
            <person name="Lu M."/>
            <person name="Harper D."/>
            <person name="Lindsay R."/>
            <person name="Hauser H."/>
            <person name="James K.D."/>
            <person name="Quiles M."/>
            <person name="Madan Babu M."/>
            <person name="Saito T."/>
            <person name="Buchrieser C."/>
            <person name="Wardroper A."/>
            <person name="Felder M."/>
            <person name="Thangavelu M."/>
            <person name="Johnson D."/>
            <person name="Knights A."/>
            <person name="Loulseged H."/>
            <person name="Mungall K.L."/>
            <person name="Oliver K."/>
            <person name="Price C."/>
            <person name="Quail M.A."/>
            <person name="Urushihara H."/>
            <person name="Hernandez J."/>
            <person name="Rabbinowitsch E."/>
            <person name="Steffen D."/>
            <person name="Sanders M."/>
            <person name="Ma J."/>
            <person name="Kohara Y."/>
            <person name="Sharp S."/>
            <person name="Simmonds M.N."/>
            <person name="Spiegler S."/>
            <person name="Tivey A."/>
            <person name="Sugano S."/>
            <person name="White B."/>
            <person name="Walker D."/>
            <person name="Woodward J.R."/>
            <person name="Winckler T."/>
            <person name="Tanaka Y."/>
            <person name="Shaulsky G."/>
            <person name="Schleicher M."/>
            <person name="Weinstock G.M."/>
            <person name="Rosenthal A."/>
            <person name="Cox E.C."/>
            <person name="Chisholm R.L."/>
            <person name="Gibbs R.A."/>
            <person name="Loomis W.F."/>
            <person name="Platzer M."/>
            <person name="Kay R.R."/>
            <person name="Williams J.G."/>
            <person name="Dear P.H."/>
            <person name="Noegel A.A."/>
            <person name="Barrell B.G."/>
            <person name="Kuspa A."/>
        </authorList>
    </citation>
    <scope>NUCLEOTIDE SEQUENCE [LARGE SCALE GENOMIC DNA]</scope>
    <source>
        <strain>AX4</strain>
    </source>
</reference>
<comment type="subcellular location">
    <subcellularLocation>
        <location evidence="1">Cytoplasm</location>
    </subcellularLocation>
</comment>
<comment type="developmental stage">
    <text>Expression drops sharply between 4 and 8 hours of development and reaches a very low level at 24 hours.</text>
</comment>
<comment type="similarity">
    <text evidence="4">Belongs to the eukaryotic ribosomal protein eS10 family.</text>
</comment>
<keyword id="KW-0963">Cytoplasm</keyword>
<keyword id="KW-0903">Direct protein sequencing</keyword>
<keyword id="KW-1185">Reference proteome</keyword>
<keyword id="KW-0687">Ribonucleoprotein</keyword>
<keyword id="KW-0689">Ribosomal protein</keyword>
<protein>
    <recommendedName>
        <fullName evidence="4">Small ribosomal subunit protein eS10</fullName>
    </recommendedName>
    <alternativeName>
        <fullName>40S ribosomal protein S10</fullName>
    </alternativeName>
</protein>
<feature type="initiator methionine" description="Removed" evidence="3">
    <location>
        <position position="1"/>
    </location>
</feature>
<feature type="chain" id="PRO_0000116365" description="Small ribosomal subunit protein eS10">
    <location>
        <begin position="2"/>
        <end position="154"/>
    </location>
</feature>
<feature type="region of interest" description="Disordered" evidence="2">
    <location>
        <begin position="91"/>
        <end position="154"/>
    </location>
</feature>
<feature type="compositionally biased region" description="Basic and acidic residues" evidence="2">
    <location>
        <begin position="124"/>
        <end position="135"/>
    </location>
</feature>
<evidence type="ECO:0000250" key="1"/>
<evidence type="ECO:0000256" key="2">
    <source>
        <dbReference type="SAM" id="MobiDB-lite"/>
    </source>
</evidence>
<evidence type="ECO:0000269" key="3">
    <source>
    </source>
</evidence>
<evidence type="ECO:0000305" key="4"/>
<organism>
    <name type="scientific">Dictyostelium discoideum</name>
    <name type="common">Social amoeba</name>
    <dbReference type="NCBI Taxonomy" id="44689"/>
    <lineage>
        <taxon>Eukaryota</taxon>
        <taxon>Amoebozoa</taxon>
        <taxon>Evosea</taxon>
        <taxon>Eumycetozoa</taxon>
        <taxon>Dictyostelia</taxon>
        <taxon>Dictyosteliales</taxon>
        <taxon>Dictyosteliaceae</taxon>
        <taxon>Dictyostelium</taxon>
    </lineage>
</organism>